<sequence length="621" mass="70130">MDFDAIVIGGGHAGIEAALALSRLNFKTLMITQNLDTIGKLSCNPAIGGLAKGNMVREIDALGGEMGRIIDFSMIQFRVLNKSRGPAVQAPRAQADKLMYQTKAKETLERQDNLDLFQDTVVDFLLNSMRNEIEGVVTERGNKFRSSVVVLTTGTFLRGKIFIGEYRADMGRLAEFSAYGLDKTLLGLGFEMGRLKTGTPARIHKKSVDFSKTEVQFGDSDIIPFSFSNGKLDKSQLSCYVTYTNKKTHEIISENMHLSPLYSGEIVGNGPRYCPSIEDKIVKFKDKDRHQIFIEPEGFNTEEMYLNGLSSSLPENIQQKLINSIEGLEHAVITRPGYAVEYDYINPIELYPNLESKRVKGLFIAGQTNGSSGYEEAAAQGLMAGINAALRLQNKKPMILTRTSSYIGVLIDDLVTKGTKEPYRMFTSRAEHRLNLRHDTSDKRLIKIGYDLGLVDEKRYSRYLFKESRVEEIKELLKQRRLSLKDVVDEQLKKHVSKDFYHILKDPSISLDNLIKIDPSLSDSKVILEQVELDVKYEGYINRQKDLIKRLDNLELVKLPFDFNYEIIEGLSREAREKFSKIQPATLAQASRIPGIRSTDITVLLIYFSNPKNKVVINFSL</sequence>
<reference key="1">
    <citation type="journal article" date="2011" name="J. Bacteriol.">
        <title>Whole-genome sequences of thirteen isolates of Borrelia burgdorferi.</title>
        <authorList>
            <person name="Schutzer S.E."/>
            <person name="Fraser-Liggett C.M."/>
            <person name="Casjens S.R."/>
            <person name="Qiu W.G."/>
            <person name="Dunn J.J."/>
            <person name="Mongodin E.F."/>
            <person name="Luft B.J."/>
        </authorList>
    </citation>
    <scope>NUCLEOTIDE SEQUENCE [LARGE SCALE GENOMIC DNA]</scope>
    <source>
        <strain>ZS7</strain>
    </source>
</reference>
<protein>
    <recommendedName>
        <fullName evidence="1">tRNA uridine 5-carboxymethylaminomethyl modification enzyme MnmG</fullName>
    </recommendedName>
    <alternativeName>
        <fullName evidence="1">Glucose-inhibited division protein A</fullName>
    </alternativeName>
</protein>
<evidence type="ECO:0000255" key="1">
    <source>
        <dbReference type="HAMAP-Rule" id="MF_00129"/>
    </source>
</evidence>
<comment type="function">
    <text evidence="1">NAD-binding protein involved in the addition of a carboxymethylaminomethyl (cmnm) group at the wobble position (U34) of certain tRNAs, forming tRNA-cmnm(5)s(2)U34.</text>
</comment>
<comment type="cofactor">
    <cofactor evidence="1">
        <name>FAD</name>
        <dbReference type="ChEBI" id="CHEBI:57692"/>
    </cofactor>
</comment>
<comment type="subunit">
    <text evidence="1">Homodimer. Heterotetramer of two MnmE and two MnmG subunits.</text>
</comment>
<comment type="subcellular location">
    <subcellularLocation>
        <location evidence="1">Cytoplasm</location>
    </subcellularLocation>
</comment>
<comment type="similarity">
    <text evidence="1">Belongs to the MnmG family.</text>
</comment>
<accession>B7J1B1</accession>
<feature type="chain" id="PRO_1000117715" description="tRNA uridine 5-carboxymethylaminomethyl modification enzyme MnmG">
    <location>
        <begin position="1"/>
        <end position="621"/>
    </location>
</feature>
<feature type="binding site" evidence="1">
    <location>
        <begin position="9"/>
        <end position="14"/>
    </location>
    <ligand>
        <name>FAD</name>
        <dbReference type="ChEBI" id="CHEBI:57692"/>
    </ligand>
</feature>
<feature type="binding site" evidence="1">
    <location>
        <begin position="270"/>
        <end position="284"/>
    </location>
    <ligand>
        <name>NAD(+)</name>
        <dbReference type="ChEBI" id="CHEBI:57540"/>
    </ligand>
</feature>
<organism>
    <name type="scientific">Borreliella burgdorferi (strain ZS7)</name>
    <name type="common">Borrelia burgdorferi</name>
    <dbReference type="NCBI Taxonomy" id="445985"/>
    <lineage>
        <taxon>Bacteria</taxon>
        <taxon>Pseudomonadati</taxon>
        <taxon>Spirochaetota</taxon>
        <taxon>Spirochaetia</taxon>
        <taxon>Spirochaetales</taxon>
        <taxon>Borreliaceae</taxon>
        <taxon>Borreliella</taxon>
    </lineage>
</organism>
<gene>
    <name evidence="1" type="primary">mnmG</name>
    <name evidence="1" type="synonym">gidA</name>
    <name type="ordered locus">BbuZS7_0178</name>
</gene>
<dbReference type="EMBL" id="CP001205">
    <property type="protein sequence ID" value="ACK74835.1"/>
    <property type="molecule type" value="Genomic_DNA"/>
</dbReference>
<dbReference type="RefSeq" id="WP_002657592.1">
    <property type="nucleotide sequence ID" value="NC_011728.1"/>
</dbReference>
<dbReference type="SMR" id="B7J1B1"/>
<dbReference type="GeneID" id="56567605"/>
<dbReference type="KEGG" id="bbz:BbuZS7_0178"/>
<dbReference type="HOGENOM" id="CLU_007831_2_2_12"/>
<dbReference type="Proteomes" id="UP000006901">
    <property type="component" value="Chromosome"/>
</dbReference>
<dbReference type="GO" id="GO:0005829">
    <property type="term" value="C:cytosol"/>
    <property type="evidence" value="ECO:0007669"/>
    <property type="project" value="TreeGrafter"/>
</dbReference>
<dbReference type="GO" id="GO:0050660">
    <property type="term" value="F:flavin adenine dinucleotide binding"/>
    <property type="evidence" value="ECO:0007669"/>
    <property type="project" value="UniProtKB-UniRule"/>
</dbReference>
<dbReference type="GO" id="GO:0030488">
    <property type="term" value="P:tRNA methylation"/>
    <property type="evidence" value="ECO:0007669"/>
    <property type="project" value="TreeGrafter"/>
</dbReference>
<dbReference type="GO" id="GO:0002098">
    <property type="term" value="P:tRNA wobble uridine modification"/>
    <property type="evidence" value="ECO:0007669"/>
    <property type="project" value="InterPro"/>
</dbReference>
<dbReference type="FunFam" id="1.10.150.570:FF:000001">
    <property type="entry name" value="tRNA uridine 5-carboxymethylaminomethyl modification enzyme MnmG"/>
    <property type="match status" value="1"/>
</dbReference>
<dbReference type="FunFam" id="3.50.50.60:FF:000002">
    <property type="entry name" value="tRNA uridine 5-carboxymethylaminomethyl modification enzyme MnmG"/>
    <property type="match status" value="1"/>
</dbReference>
<dbReference type="Gene3D" id="3.50.50.60">
    <property type="entry name" value="FAD/NAD(P)-binding domain"/>
    <property type="match status" value="2"/>
</dbReference>
<dbReference type="Gene3D" id="1.10.150.570">
    <property type="entry name" value="GidA associated domain, C-terminal subdomain"/>
    <property type="match status" value="1"/>
</dbReference>
<dbReference type="Gene3D" id="1.10.10.1800">
    <property type="entry name" value="tRNA uridine 5-carboxymethylaminomethyl modification enzyme MnmG/GidA"/>
    <property type="match status" value="1"/>
</dbReference>
<dbReference type="HAMAP" id="MF_00129">
    <property type="entry name" value="MnmG_GidA"/>
    <property type="match status" value="1"/>
</dbReference>
<dbReference type="InterPro" id="IPR036188">
    <property type="entry name" value="FAD/NAD-bd_sf"/>
</dbReference>
<dbReference type="InterPro" id="IPR049312">
    <property type="entry name" value="GIDA_C_N"/>
</dbReference>
<dbReference type="InterPro" id="IPR004416">
    <property type="entry name" value="MnmG"/>
</dbReference>
<dbReference type="InterPro" id="IPR002218">
    <property type="entry name" value="MnmG-rel"/>
</dbReference>
<dbReference type="InterPro" id="IPR020595">
    <property type="entry name" value="MnmG-rel_CS"/>
</dbReference>
<dbReference type="InterPro" id="IPR026904">
    <property type="entry name" value="MnmG_C"/>
</dbReference>
<dbReference type="InterPro" id="IPR047001">
    <property type="entry name" value="MnmG_C_subdom"/>
</dbReference>
<dbReference type="InterPro" id="IPR044920">
    <property type="entry name" value="MnmG_C_subdom_sf"/>
</dbReference>
<dbReference type="InterPro" id="IPR040131">
    <property type="entry name" value="MnmG_N"/>
</dbReference>
<dbReference type="NCBIfam" id="TIGR00136">
    <property type="entry name" value="mnmG_gidA"/>
    <property type="match status" value="1"/>
</dbReference>
<dbReference type="PANTHER" id="PTHR11806">
    <property type="entry name" value="GLUCOSE INHIBITED DIVISION PROTEIN A"/>
    <property type="match status" value="1"/>
</dbReference>
<dbReference type="PANTHER" id="PTHR11806:SF0">
    <property type="entry name" value="PROTEIN MTO1 HOMOLOG, MITOCHONDRIAL"/>
    <property type="match status" value="1"/>
</dbReference>
<dbReference type="Pfam" id="PF01134">
    <property type="entry name" value="GIDA"/>
    <property type="match status" value="1"/>
</dbReference>
<dbReference type="Pfam" id="PF21680">
    <property type="entry name" value="GIDA_C_1st"/>
    <property type="match status" value="1"/>
</dbReference>
<dbReference type="Pfam" id="PF13932">
    <property type="entry name" value="SAM_GIDA_C"/>
    <property type="match status" value="1"/>
</dbReference>
<dbReference type="SMART" id="SM01228">
    <property type="entry name" value="GIDA_assoc_3"/>
    <property type="match status" value="1"/>
</dbReference>
<dbReference type="SUPFAM" id="SSF51905">
    <property type="entry name" value="FAD/NAD(P)-binding domain"/>
    <property type="match status" value="1"/>
</dbReference>
<dbReference type="PROSITE" id="PS01280">
    <property type="entry name" value="GIDA_1"/>
    <property type="match status" value="1"/>
</dbReference>
<dbReference type="PROSITE" id="PS01281">
    <property type="entry name" value="GIDA_2"/>
    <property type="match status" value="1"/>
</dbReference>
<keyword id="KW-0963">Cytoplasm</keyword>
<keyword id="KW-0274">FAD</keyword>
<keyword id="KW-0285">Flavoprotein</keyword>
<keyword id="KW-0520">NAD</keyword>
<keyword id="KW-0819">tRNA processing</keyword>
<proteinExistence type="inferred from homology"/>
<name>MNMG_BORBZ</name>